<name>EIF3J_VANPO</name>
<gene>
    <name evidence="1" type="primary">HCR1</name>
    <name type="ORF">Kpol_489p7</name>
</gene>
<evidence type="ECO:0000255" key="1">
    <source>
        <dbReference type="HAMAP-Rule" id="MF_03009"/>
    </source>
</evidence>
<evidence type="ECO:0000256" key="2">
    <source>
        <dbReference type="SAM" id="MobiDB-lite"/>
    </source>
</evidence>
<dbReference type="EMBL" id="DS480451">
    <property type="protein sequence ID" value="EDO15626.1"/>
    <property type="molecule type" value="Genomic_DNA"/>
</dbReference>
<dbReference type="RefSeq" id="XP_001643484.1">
    <property type="nucleotide sequence ID" value="XM_001643434.1"/>
</dbReference>
<dbReference type="SMR" id="A7TQ21"/>
<dbReference type="FunCoup" id="A7TQ21">
    <property type="interactions" value="129"/>
</dbReference>
<dbReference type="STRING" id="436907.A7TQ21"/>
<dbReference type="GeneID" id="5543728"/>
<dbReference type="KEGG" id="vpo:Kpol_489p7"/>
<dbReference type="eggNOG" id="KOG4813">
    <property type="taxonomic scope" value="Eukaryota"/>
</dbReference>
<dbReference type="HOGENOM" id="CLU_085412_0_0_1"/>
<dbReference type="InParanoid" id="A7TQ21"/>
<dbReference type="OMA" id="MESWDAE"/>
<dbReference type="OrthoDB" id="20381at2759"/>
<dbReference type="PhylomeDB" id="A7TQ21"/>
<dbReference type="Proteomes" id="UP000000267">
    <property type="component" value="Unassembled WGS sequence"/>
</dbReference>
<dbReference type="GO" id="GO:0016282">
    <property type="term" value="C:eukaryotic 43S preinitiation complex"/>
    <property type="evidence" value="ECO:0007669"/>
    <property type="project" value="UniProtKB-UniRule"/>
</dbReference>
<dbReference type="GO" id="GO:0033290">
    <property type="term" value="C:eukaryotic 48S preinitiation complex"/>
    <property type="evidence" value="ECO:0007669"/>
    <property type="project" value="UniProtKB-UniRule"/>
</dbReference>
<dbReference type="GO" id="GO:0005852">
    <property type="term" value="C:eukaryotic translation initiation factor 3 complex"/>
    <property type="evidence" value="ECO:0007669"/>
    <property type="project" value="UniProtKB-UniRule"/>
</dbReference>
<dbReference type="GO" id="GO:0003743">
    <property type="term" value="F:translation initiation factor activity"/>
    <property type="evidence" value="ECO:0007669"/>
    <property type="project" value="UniProtKB-UniRule"/>
</dbReference>
<dbReference type="GO" id="GO:0001732">
    <property type="term" value="P:formation of cytoplasmic translation initiation complex"/>
    <property type="evidence" value="ECO:0007669"/>
    <property type="project" value="UniProtKB-UniRule"/>
</dbReference>
<dbReference type="GO" id="GO:0000462">
    <property type="term" value="P:maturation of SSU-rRNA from tricistronic rRNA transcript (SSU-rRNA, 5.8S rRNA, LSU-rRNA)"/>
    <property type="evidence" value="ECO:0007669"/>
    <property type="project" value="EnsemblFungi"/>
</dbReference>
<dbReference type="GO" id="GO:0000184">
    <property type="term" value="P:nuclear-transcribed mRNA catabolic process, nonsense-mediated decay"/>
    <property type="evidence" value="ECO:0007669"/>
    <property type="project" value="EnsemblFungi"/>
</dbReference>
<dbReference type="Gene3D" id="1.10.246.60">
    <property type="entry name" value="Eukaryotic translation initiation factor 3 like domains"/>
    <property type="match status" value="1"/>
</dbReference>
<dbReference type="HAMAP" id="MF_03009">
    <property type="entry name" value="eIF3j"/>
    <property type="match status" value="1"/>
</dbReference>
<dbReference type="InterPro" id="IPR023194">
    <property type="entry name" value="eIF3-like_dom_sf"/>
</dbReference>
<dbReference type="InterPro" id="IPR013906">
    <property type="entry name" value="eIF3j"/>
</dbReference>
<dbReference type="PANTHER" id="PTHR21681">
    <property type="entry name" value="EUKARYOTIC TRANSLATION INITIATION FACTOR 3 SUBUNIT J"/>
    <property type="match status" value="1"/>
</dbReference>
<dbReference type="PANTHER" id="PTHR21681:SF0">
    <property type="entry name" value="EUKARYOTIC TRANSLATION INITIATION FACTOR 3 SUBUNIT J"/>
    <property type="match status" value="1"/>
</dbReference>
<dbReference type="Pfam" id="PF08597">
    <property type="entry name" value="eIF3_subunit"/>
    <property type="match status" value="1"/>
</dbReference>
<reference key="1">
    <citation type="journal article" date="2007" name="Proc. Natl. Acad. Sci. U.S.A.">
        <title>Independent sorting-out of thousands of duplicated gene pairs in two yeast species descended from a whole-genome duplication.</title>
        <authorList>
            <person name="Scannell D.R."/>
            <person name="Frank A.C."/>
            <person name="Conant G.C."/>
            <person name="Byrne K.P."/>
            <person name="Woolfit M."/>
            <person name="Wolfe K.H."/>
        </authorList>
    </citation>
    <scope>NUCLEOTIDE SEQUENCE [LARGE SCALE GENOMIC DNA]</scope>
    <source>
        <strain>ATCC 22028 / DSM 70294 / BCRC 21397 / CBS 2163 / NBRC 10782 / NRRL Y-8283 / UCD 57-17</strain>
    </source>
</reference>
<feature type="chain" id="PRO_0000365159" description="Eukaryotic translation initiation factor 3 subunit J">
    <location>
        <begin position="1"/>
        <end position="267"/>
    </location>
</feature>
<feature type="region of interest" description="Disordered" evidence="2">
    <location>
        <begin position="1"/>
        <end position="70"/>
    </location>
</feature>
<feature type="coiled-coil region" evidence="1">
    <location>
        <begin position="192"/>
        <end position="220"/>
    </location>
</feature>
<feature type="compositionally biased region" description="Acidic residues" evidence="2">
    <location>
        <begin position="24"/>
        <end position="38"/>
    </location>
</feature>
<feature type="compositionally biased region" description="Basic and acidic residues" evidence="2">
    <location>
        <begin position="39"/>
        <end position="66"/>
    </location>
</feature>
<protein>
    <recommendedName>
        <fullName evidence="1">Eukaryotic translation initiation factor 3 subunit J</fullName>
        <shortName evidence="1">eIF3j</shortName>
    </recommendedName>
    <alternativeName>
        <fullName>Eukaryotic translation initiation factor 3 30 kDa subunit</fullName>
        <shortName>eIF-3 30 kDa</shortName>
    </alternativeName>
</protein>
<accession>A7TQ21</accession>
<keyword id="KW-0175">Coiled coil</keyword>
<keyword id="KW-0963">Cytoplasm</keyword>
<keyword id="KW-0396">Initiation factor</keyword>
<keyword id="KW-0648">Protein biosynthesis</keyword>
<keyword id="KW-1185">Reference proteome</keyword>
<proteinExistence type="inferred from homology"/>
<sequence>MSWNDDDVFAGSANNDDVVLMDSWDAEEPIMESWDAEETPAKKETSPKPDSKKNAKKDSKKDKKSSTDQVLLEIDVLDEKTRKELLKKAELESDLNNAAELFGSLGVAEEHPRARALRKEQEVADAMRPAAFTKDTPIESHPLFNGESKKDYQDLRKALATAIVTMNEKSSLNYSSSLAIDLIRDVAKPMSIESIRQSIATLNVLMKDKEREERRARLAKVKGGTATGGAGKKKAKAKTNLGGAFKKDQEFDMGVDTYEDFGDDDFM</sequence>
<comment type="function">
    <text evidence="1">Component of the eukaryotic translation initiation factor 3 (eIF-3) complex, which is involved in protein synthesis of a specialized repertoire of mRNAs and, together with other initiation factors, stimulates binding of mRNA and methionyl-tRNAi to the 40S ribosome. The eIF-3 complex specifically targets and initiates translation of a subset of mRNAs involved in cell proliferation.</text>
</comment>
<comment type="subunit">
    <text evidence="1">Component of the eukaryotic translation initiation factor 3 (eIF-3) complex.</text>
</comment>
<comment type="subcellular location">
    <subcellularLocation>
        <location evidence="1">Cytoplasm</location>
    </subcellularLocation>
</comment>
<comment type="similarity">
    <text evidence="1">Belongs to the eIF-3 subunit J family.</text>
</comment>
<organism>
    <name type="scientific">Vanderwaltozyma polyspora (strain ATCC 22028 / DSM 70294 / BCRC 21397 / CBS 2163 / NBRC 10782 / NRRL Y-8283 / UCD 57-17)</name>
    <name type="common">Kluyveromyces polysporus</name>
    <dbReference type="NCBI Taxonomy" id="436907"/>
    <lineage>
        <taxon>Eukaryota</taxon>
        <taxon>Fungi</taxon>
        <taxon>Dikarya</taxon>
        <taxon>Ascomycota</taxon>
        <taxon>Saccharomycotina</taxon>
        <taxon>Saccharomycetes</taxon>
        <taxon>Saccharomycetales</taxon>
        <taxon>Saccharomycetaceae</taxon>
        <taxon>Vanderwaltozyma</taxon>
    </lineage>
</organism>